<accession>Q820D2</accession>
<reference key="1">
    <citation type="journal article" date="2003" name="J. Bacteriol.">
        <title>Complete genome sequence of the ammonia-oxidizing bacterium and obligate chemolithoautotroph Nitrosomonas europaea.</title>
        <authorList>
            <person name="Chain P."/>
            <person name="Lamerdin J.E."/>
            <person name="Larimer F.W."/>
            <person name="Regala W."/>
            <person name="Lao V."/>
            <person name="Land M.L."/>
            <person name="Hauser L."/>
            <person name="Hooper A.B."/>
            <person name="Klotz M.G."/>
            <person name="Norton J."/>
            <person name="Sayavedra-Soto L.A."/>
            <person name="Arciero D.M."/>
            <person name="Hommes N.G."/>
            <person name="Whittaker M.M."/>
            <person name="Arp D.J."/>
        </authorList>
    </citation>
    <scope>NUCLEOTIDE SEQUENCE [LARGE SCALE GENOMIC DNA]</scope>
    <source>
        <strain>ATCC 19718 / CIP 103999 / KCTC 2705 / NBRC 14298</strain>
    </source>
</reference>
<feature type="chain" id="PRO_0000152399" description="Imidazole glycerol phosphate synthase subunit HisH">
    <location>
        <begin position="1"/>
        <end position="212"/>
    </location>
</feature>
<feature type="domain" description="Glutamine amidotransferase type-1" evidence="1">
    <location>
        <begin position="3"/>
        <end position="212"/>
    </location>
</feature>
<feature type="active site" description="Nucleophile" evidence="1">
    <location>
        <position position="82"/>
    </location>
</feature>
<feature type="active site" evidence="1">
    <location>
        <position position="192"/>
    </location>
</feature>
<feature type="active site" evidence="1">
    <location>
        <position position="194"/>
    </location>
</feature>
<protein>
    <recommendedName>
        <fullName evidence="1">Imidazole glycerol phosphate synthase subunit HisH</fullName>
        <ecNumber evidence="1">4.3.2.10</ecNumber>
    </recommendedName>
    <alternativeName>
        <fullName evidence="1">IGP synthase glutaminase subunit</fullName>
        <ecNumber evidence="1">3.5.1.2</ecNumber>
    </alternativeName>
    <alternativeName>
        <fullName evidence="1">IGP synthase subunit HisH</fullName>
    </alternativeName>
    <alternativeName>
        <fullName evidence="1">ImGP synthase subunit HisH</fullName>
        <shortName evidence="1">IGPS subunit HisH</shortName>
    </alternativeName>
</protein>
<organism>
    <name type="scientific">Nitrosomonas europaea (strain ATCC 19718 / CIP 103999 / KCTC 2705 / NBRC 14298)</name>
    <dbReference type="NCBI Taxonomy" id="228410"/>
    <lineage>
        <taxon>Bacteria</taxon>
        <taxon>Pseudomonadati</taxon>
        <taxon>Pseudomonadota</taxon>
        <taxon>Betaproteobacteria</taxon>
        <taxon>Nitrosomonadales</taxon>
        <taxon>Nitrosomonadaceae</taxon>
        <taxon>Nitrosomonas</taxon>
    </lineage>
</organism>
<dbReference type="EC" id="4.3.2.10" evidence="1"/>
<dbReference type="EC" id="3.5.1.2" evidence="1"/>
<dbReference type="EMBL" id="AL954747">
    <property type="protein sequence ID" value="CAD84556.1"/>
    <property type="molecule type" value="Genomic_DNA"/>
</dbReference>
<dbReference type="RefSeq" id="WP_011111268.1">
    <property type="nucleotide sequence ID" value="NC_004757.1"/>
</dbReference>
<dbReference type="SMR" id="Q820D2"/>
<dbReference type="STRING" id="228410.NE0645"/>
<dbReference type="GeneID" id="87103842"/>
<dbReference type="KEGG" id="neu:NE0645"/>
<dbReference type="eggNOG" id="COG0118">
    <property type="taxonomic scope" value="Bacteria"/>
</dbReference>
<dbReference type="HOGENOM" id="CLU_071837_2_0_4"/>
<dbReference type="OrthoDB" id="9807137at2"/>
<dbReference type="PhylomeDB" id="Q820D2"/>
<dbReference type="UniPathway" id="UPA00031">
    <property type="reaction ID" value="UER00010"/>
</dbReference>
<dbReference type="Proteomes" id="UP000001416">
    <property type="component" value="Chromosome"/>
</dbReference>
<dbReference type="GO" id="GO:0005737">
    <property type="term" value="C:cytoplasm"/>
    <property type="evidence" value="ECO:0007669"/>
    <property type="project" value="UniProtKB-SubCell"/>
</dbReference>
<dbReference type="GO" id="GO:0004359">
    <property type="term" value="F:glutaminase activity"/>
    <property type="evidence" value="ECO:0007669"/>
    <property type="project" value="UniProtKB-EC"/>
</dbReference>
<dbReference type="GO" id="GO:0000107">
    <property type="term" value="F:imidazoleglycerol-phosphate synthase activity"/>
    <property type="evidence" value="ECO:0007669"/>
    <property type="project" value="UniProtKB-UniRule"/>
</dbReference>
<dbReference type="GO" id="GO:0016829">
    <property type="term" value="F:lyase activity"/>
    <property type="evidence" value="ECO:0007669"/>
    <property type="project" value="UniProtKB-KW"/>
</dbReference>
<dbReference type="GO" id="GO:0000105">
    <property type="term" value="P:L-histidine biosynthetic process"/>
    <property type="evidence" value="ECO:0007669"/>
    <property type="project" value="UniProtKB-UniRule"/>
</dbReference>
<dbReference type="CDD" id="cd01748">
    <property type="entry name" value="GATase1_IGP_Synthase"/>
    <property type="match status" value="1"/>
</dbReference>
<dbReference type="Gene3D" id="3.40.50.880">
    <property type="match status" value="1"/>
</dbReference>
<dbReference type="HAMAP" id="MF_00278">
    <property type="entry name" value="HisH"/>
    <property type="match status" value="1"/>
</dbReference>
<dbReference type="InterPro" id="IPR029062">
    <property type="entry name" value="Class_I_gatase-like"/>
</dbReference>
<dbReference type="InterPro" id="IPR017926">
    <property type="entry name" value="GATASE"/>
</dbReference>
<dbReference type="InterPro" id="IPR010139">
    <property type="entry name" value="Imidazole-glycPsynth_HisH"/>
</dbReference>
<dbReference type="NCBIfam" id="TIGR01855">
    <property type="entry name" value="IMP_synth_hisH"/>
    <property type="match status" value="1"/>
</dbReference>
<dbReference type="PANTHER" id="PTHR42701">
    <property type="entry name" value="IMIDAZOLE GLYCEROL PHOSPHATE SYNTHASE SUBUNIT HISH"/>
    <property type="match status" value="1"/>
</dbReference>
<dbReference type="PANTHER" id="PTHR42701:SF2">
    <property type="entry name" value="IMIDAZOLE GLYCEROL PHOSPHATE SYNTHASE SUBUNIT HISH 1"/>
    <property type="match status" value="1"/>
</dbReference>
<dbReference type="Pfam" id="PF00117">
    <property type="entry name" value="GATase"/>
    <property type="match status" value="1"/>
</dbReference>
<dbReference type="PIRSF" id="PIRSF000495">
    <property type="entry name" value="Amidotransf_hisH"/>
    <property type="match status" value="1"/>
</dbReference>
<dbReference type="SUPFAM" id="SSF52317">
    <property type="entry name" value="Class I glutamine amidotransferase-like"/>
    <property type="match status" value="1"/>
</dbReference>
<dbReference type="PROSITE" id="PS51273">
    <property type="entry name" value="GATASE_TYPE_1"/>
    <property type="match status" value="1"/>
</dbReference>
<sequence>MNSIAVVDYGMGNLRSVSKALEYVDSSAVVTVTSDPETIRSAARVVVPGQGAMPHCMQALDDQGLRESVIEAAKNKPFLGICLGLQMLFEESEEGNIRALGILPGRVKKLESTDTADSDIPKIKIPHMGWNQVHQTLEHPLWHGIDTDTRFYFVHSYYVATDEPQIVAGSTEYPVPFTCAVARDNIFAIQFHPEKSHSAGLALLSNFLKWTP</sequence>
<proteinExistence type="inferred from homology"/>
<keyword id="KW-0028">Amino-acid biosynthesis</keyword>
<keyword id="KW-0963">Cytoplasm</keyword>
<keyword id="KW-0315">Glutamine amidotransferase</keyword>
<keyword id="KW-0368">Histidine biosynthesis</keyword>
<keyword id="KW-0378">Hydrolase</keyword>
<keyword id="KW-0456">Lyase</keyword>
<keyword id="KW-1185">Reference proteome</keyword>
<gene>
    <name evidence="1" type="primary">hisH</name>
    <name type="ordered locus">NE0645</name>
</gene>
<comment type="function">
    <text evidence="1">IGPS catalyzes the conversion of PRFAR and glutamine to IGP, AICAR and glutamate. The HisH subunit catalyzes the hydrolysis of glutamine to glutamate and ammonia as part of the synthesis of IGP and AICAR. The resulting ammonia molecule is channeled to the active site of HisF.</text>
</comment>
<comment type="catalytic activity">
    <reaction evidence="1">
        <text>5-[(5-phospho-1-deoxy-D-ribulos-1-ylimino)methylamino]-1-(5-phospho-beta-D-ribosyl)imidazole-4-carboxamide + L-glutamine = D-erythro-1-(imidazol-4-yl)glycerol 3-phosphate + 5-amino-1-(5-phospho-beta-D-ribosyl)imidazole-4-carboxamide + L-glutamate + H(+)</text>
        <dbReference type="Rhea" id="RHEA:24793"/>
        <dbReference type="ChEBI" id="CHEBI:15378"/>
        <dbReference type="ChEBI" id="CHEBI:29985"/>
        <dbReference type="ChEBI" id="CHEBI:58278"/>
        <dbReference type="ChEBI" id="CHEBI:58359"/>
        <dbReference type="ChEBI" id="CHEBI:58475"/>
        <dbReference type="ChEBI" id="CHEBI:58525"/>
        <dbReference type="EC" id="4.3.2.10"/>
    </reaction>
</comment>
<comment type="catalytic activity">
    <reaction evidence="1">
        <text>L-glutamine + H2O = L-glutamate + NH4(+)</text>
        <dbReference type="Rhea" id="RHEA:15889"/>
        <dbReference type="ChEBI" id="CHEBI:15377"/>
        <dbReference type="ChEBI" id="CHEBI:28938"/>
        <dbReference type="ChEBI" id="CHEBI:29985"/>
        <dbReference type="ChEBI" id="CHEBI:58359"/>
        <dbReference type="EC" id="3.5.1.2"/>
    </reaction>
</comment>
<comment type="pathway">
    <text evidence="1">Amino-acid biosynthesis; L-histidine biosynthesis; L-histidine from 5-phospho-alpha-D-ribose 1-diphosphate: step 5/9.</text>
</comment>
<comment type="subunit">
    <text evidence="1">Heterodimer of HisH and HisF.</text>
</comment>
<comment type="subcellular location">
    <subcellularLocation>
        <location evidence="1">Cytoplasm</location>
    </subcellularLocation>
</comment>
<evidence type="ECO:0000255" key="1">
    <source>
        <dbReference type="HAMAP-Rule" id="MF_00278"/>
    </source>
</evidence>
<name>HIS5_NITEU</name>